<proteinExistence type="evidence at transcript level"/>
<dbReference type="EMBL" id="CR857774">
    <property type="protein sequence ID" value="CAH90038.1"/>
    <property type="molecule type" value="mRNA"/>
</dbReference>
<dbReference type="RefSeq" id="NP_001127228.1">
    <property type="nucleotide sequence ID" value="NM_001133756.1"/>
</dbReference>
<dbReference type="SMR" id="Q5RDW9"/>
<dbReference type="STRING" id="9601.ENSPPYP00000003876"/>
<dbReference type="GeneID" id="100174283"/>
<dbReference type="KEGG" id="pon:100174283"/>
<dbReference type="CTD" id="1479"/>
<dbReference type="eggNOG" id="KOG1914">
    <property type="taxonomic scope" value="Eukaryota"/>
</dbReference>
<dbReference type="InParanoid" id="Q5RDW9"/>
<dbReference type="OrthoDB" id="26282at2759"/>
<dbReference type="Proteomes" id="UP000001595">
    <property type="component" value="Unplaced"/>
</dbReference>
<dbReference type="GO" id="GO:0005634">
    <property type="term" value="C:nucleus"/>
    <property type="evidence" value="ECO:0007669"/>
    <property type="project" value="UniProtKB-SubCell"/>
</dbReference>
<dbReference type="GO" id="GO:0003729">
    <property type="term" value="F:mRNA binding"/>
    <property type="evidence" value="ECO:0007669"/>
    <property type="project" value="TreeGrafter"/>
</dbReference>
<dbReference type="GO" id="GO:0031124">
    <property type="term" value="P:mRNA 3'-end processing"/>
    <property type="evidence" value="ECO:0007669"/>
    <property type="project" value="InterPro"/>
</dbReference>
<dbReference type="FunFam" id="1.25.40.1040:FF:000002">
    <property type="entry name" value="Cleavage stimulation factor subunit 3"/>
    <property type="match status" value="1"/>
</dbReference>
<dbReference type="FunFam" id="1.25.40.10:FF:002655">
    <property type="entry name" value="Cleavage stimulation factor subunit 3"/>
    <property type="match status" value="1"/>
</dbReference>
<dbReference type="Gene3D" id="1.25.40.1040">
    <property type="match status" value="1"/>
</dbReference>
<dbReference type="InterPro" id="IPR003107">
    <property type="entry name" value="HAT"/>
</dbReference>
<dbReference type="InterPro" id="IPR045243">
    <property type="entry name" value="Rna14-like"/>
</dbReference>
<dbReference type="InterPro" id="IPR008847">
    <property type="entry name" value="Suf"/>
</dbReference>
<dbReference type="InterPro" id="IPR011990">
    <property type="entry name" value="TPR-like_helical_dom_sf"/>
</dbReference>
<dbReference type="PANTHER" id="PTHR19980:SF0">
    <property type="entry name" value="CLEAVAGE STIMULATION FACTOR SUBUNIT 3"/>
    <property type="match status" value="1"/>
</dbReference>
<dbReference type="PANTHER" id="PTHR19980">
    <property type="entry name" value="RNA CLEAVAGE STIMULATION FACTOR"/>
    <property type="match status" value="1"/>
</dbReference>
<dbReference type="Pfam" id="PF05843">
    <property type="entry name" value="Suf"/>
    <property type="match status" value="1"/>
</dbReference>
<dbReference type="SMART" id="SM00386">
    <property type="entry name" value="HAT"/>
    <property type="match status" value="10"/>
</dbReference>
<dbReference type="SUPFAM" id="SSF48452">
    <property type="entry name" value="TPR-like"/>
    <property type="match status" value="1"/>
</dbReference>
<organism>
    <name type="scientific">Pongo abelii</name>
    <name type="common">Sumatran orangutan</name>
    <name type="synonym">Pongo pygmaeus abelii</name>
    <dbReference type="NCBI Taxonomy" id="9601"/>
    <lineage>
        <taxon>Eukaryota</taxon>
        <taxon>Metazoa</taxon>
        <taxon>Chordata</taxon>
        <taxon>Craniata</taxon>
        <taxon>Vertebrata</taxon>
        <taxon>Euteleostomi</taxon>
        <taxon>Mammalia</taxon>
        <taxon>Eutheria</taxon>
        <taxon>Euarchontoglires</taxon>
        <taxon>Primates</taxon>
        <taxon>Haplorrhini</taxon>
        <taxon>Catarrhini</taxon>
        <taxon>Hominidae</taxon>
        <taxon>Pongo</taxon>
    </lineage>
</organism>
<accession>Q5RDW9</accession>
<reference key="1">
    <citation type="submission" date="2004-11" db="EMBL/GenBank/DDBJ databases">
        <authorList>
            <consortium name="The German cDNA consortium"/>
        </authorList>
    </citation>
    <scope>NUCLEOTIDE SEQUENCE [LARGE SCALE MRNA]</scope>
    <source>
        <tissue>Heart</tissue>
    </source>
</reference>
<comment type="function">
    <text evidence="1">One of the multiple factors required for polyadenylation and 3'-end cleavage of mammalian pre-mRNAs.</text>
</comment>
<comment type="subunit">
    <text evidence="1">Homodimer. The CSTF complex is composed of CSTF1 (50 kDa subunit), CSTF2 (64 kDa subunit) and CSTF3 (77 kDa subunit). CSTF3 directly interacts with CSTF1 and CSTF2. Interacts with FIP1L1 (By similarity).</text>
</comment>
<comment type="subcellular location">
    <subcellularLocation>
        <location evidence="1">Nucleus</location>
    </subcellularLocation>
</comment>
<sequence length="717" mass="82910">MSGDGATEQAAEYVPEKVKKAEKKLEENPYDLDAWSTLIREAQNQPIDKARKTYERLVAQFPSSGRFWKLYIEAEIKAKNYDKVEKLFQRCLMKVLHIDLWKCYLSYVRETKGKLPSYKEKMAQAYDFALDKIGMEIMSYQIWVDYINFLKGVEAVGSYAENQRITAVRRVYQRGCVNPMINIEQLWRDYNKYEEGINIHLAKKMIEDRSRDYMNARRVAKEYETVMKGLDRNAPSVPPQNTPQEAQQVDMWKKYIQWEKSNPLRTEDQTLITKRVMFAYEQCLLVLGHHPDIWYEAAQYLEQSSKLLAEKGDMNNAKLFSDEAANIYERAISTLLKKNMLLYFAYADYEESRMKYEKVHSIYNRLLAIEDIDPTLVYIQYMKFARRAEGIKSGRMIFKKAREDTRTRHHVYVTAALMEYYCSKDKSVAFKIFELGLKKYGDIPEYVLAYIDYLSHLNEDNNTRVLFERVLTSGSLPPEKSGEIWARFLAFESNIGDLASILKVEKRRFTAFKEEYEGKETALLVDRYKFMDLYPCSASELKALGYKDVSRAKLAAIIPDPVVAPSIVPVLKDEVDRKPEYPKPDTQQMIPFQPRHLAPPGLHPVPGGVFPVPPAAVVLMKLLPPPICFQGPFVQVDELMEIFRRCKIPNTVEEAVRIITGGAPELAVEGNGPVESNAVLTKAVKRPNEDSDEDEEKGAVVPPVHDIYRARQQKRIR</sequence>
<gene>
    <name type="primary">CSTF3</name>
</gene>
<keyword id="KW-0007">Acetylation</keyword>
<keyword id="KW-0507">mRNA processing</keyword>
<keyword id="KW-0539">Nucleus</keyword>
<keyword id="KW-0597">Phosphoprotein</keyword>
<keyword id="KW-1185">Reference proteome</keyword>
<keyword id="KW-0677">Repeat</keyword>
<protein>
    <recommendedName>
        <fullName>Cleavage stimulation factor subunit 3</fullName>
    </recommendedName>
    <alternativeName>
        <fullName>CF-1 77 kDa subunit</fullName>
    </alternativeName>
    <alternativeName>
        <fullName>Cleavage stimulation factor 77 kDa subunit</fullName>
        <shortName>CSTF 77 kDa subunit</shortName>
        <shortName>CstF-77</shortName>
    </alternativeName>
</protein>
<feature type="initiator methionine" description="Removed" evidence="2">
    <location>
        <position position="1"/>
    </location>
</feature>
<feature type="chain" id="PRO_0000205724" description="Cleavage stimulation factor subunit 3">
    <location>
        <begin position="2"/>
        <end position="717"/>
    </location>
</feature>
<feature type="repeat" description="HAT 1">
    <location>
        <begin position="45"/>
        <end position="77"/>
    </location>
</feature>
<feature type="repeat" description="HAT 2">
    <location>
        <begin position="79"/>
        <end position="110"/>
    </location>
</feature>
<feature type="repeat" description="HAT 3">
    <location>
        <begin position="117"/>
        <end position="152"/>
    </location>
</feature>
<feature type="repeat" description="HAT 4">
    <location>
        <begin position="163"/>
        <end position="196"/>
    </location>
</feature>
<feature type="repeat" description="HAT 5">
    <location>
        <begin position="221"/>
        <end position="261"/>
    </location>
</feature>
<feature type="repeat" description="HAT 6">
    <location>
        <begin position="271"/>
        <end position="303"/>
    </location>
</feature>
<feature type="repeat" description="HAT 7">
    <location>
        <begin position="319"/>
        <end position="352"/>
    </location>
</feature>
<feature type="repeat" description="HAT 8">
    <location>
        <begin position="354"/>
        <end position="387"/>
    </location>
</feature>
<feature type="repeat" description="HAT 9">
    <location>
        <begin position="458"/>
        <end position="494"/>
    </location>
</feature>
<feature type="region of interest" description="Disordered" evidence="3">
    <location>
        <begin position="684"/>
        <end position="705"/>
    </location>
</feature>
<feature type="modified residue" description="N-acetylserine" evidence="2">
    <location>
        <position position="2"/>
    </location>
</feature>
<feature type="modified residue" description="Phosphoserine" evidence="2">
    <location>
        <position position="691"/>
    </location>
</feature>
<name>CSTF3_PONAB</name>
<evidence type="ECO:0000250" key="1"/>
<evidence type="ECO:0000250" key="2">
    <source>
        <dbReference type="UniProtKB" id="Q12996"/>
    </source>
</evidence>
<evidence type="ECO:0000256" key="3">
    <source>
        <dbReference type="SAM" id="MobiDB-lite"/>
    </source>
</evidence>